<protein>
    <recommendedName>
        <fullName evidence="1">Hydroxylamine reductase</fullName>
        <ecNumber evidence="1">1.7.99.1</ecNumber>
    </recommendedName>
    <alternativeName>
        <fullName evidence="1">Hybrid-cluster protein</fullName>
        <shortName evidence="1">HCP</shortName>
    </alternativeName>
    <alternativeName>
        <fullName evidence="1">Prismane protein</fullName>
    </alternativeName>
</protein>
<feature type="chain" id="PRO_1000118017" description="Hydroxylamine reductase">
    <location>
        <begin position="1"/>
        <end position="549"/>
    </location>
</feature>
<feature type="binding site" evidence="1">
    <location>
        <position position="5"/>
    </location>
    <ligand>
        <name>[4Fe-4S] cluster</name>
        <dbReference type="ChEBI" id="CHEBI:49883"/>
    </ligand>
</feature>
<feature type="binding site" evidence="1">
    <location>
        <position position="8"/>
    </location>
    <ligand>
        <name>[4Fe-4S] cluster</name>
        <dbReference type="ChEBI" id="CHEBI:49883"/>
    </ligand>
</feature>
<feature type="binding site" evidence="1">
    <location>
        <position position="17"/>
    </location>
    <ligand>
        <name>[4Fe-4S] cluster</name>
        <dbReference type="ChEBI" id="CHEBI:49883"/>
    </ligand>
</feature>
<feature type="binding site" evidence="1">
    <location>
        <position position="23"/>
    </location>
    <ligand>
        <name>[4Fe-4S] cluster</name>
        <dbReference type="ChEBI" id="CHEBI:49883"/>
    </ligand>
</feature>
<feature type="binding site" evidence="1">
    <location>
        <position position="243"/>
    </location>
    <ligand>
        <name>hybrid [4Fe-2O-2S] cluster</name>
        <dbReference type="ChEBI" id="CHEBI:60519"/>
    </ligand>
</feature>
<feature type="binding site" evidence="1">
    <location>
        <position position="267"/>
    </location>
    <ligand>
        <name>hybrid [4Fe-2O-2S] cluster</name>
        <dbReference type="ChEBI" id="CHEBI:60519"/>
    </ligand>
</feature>
<feature type="binding site" evidence="1">
    <location>
        <position position="311"/>
    </location>
    <ligand>
        <name>hybrid [4Fe-2O-2S] cluster</name>
        <dbReference type="ChEBI" id="CHEBI:60519"/>
    </ligand>
</feature>
<feature type="binding site" description="via persulfide group" evidence="1">
    <location>
        <position position="403"/>
    </location>
    <ligand>
        <name>hybrid [4Fe-2O-2S] cluster</name>
        <dbReference type="ChEBI" id="CHEBI:60519"/>
    </ligand>
</feature>
<feature type="binding site" evidence="1">
    <location>
        <position position="431"/>
    </location>
    <ligand>
        <name>hybrid [4Fe-2O-2S] cluster</name>
        <dbReference type="ChEBI" id="CHEBI:60519"/>
    </ligand>
</feature>
<feature type="binding site" evidence="1">
    <location>
        <position position="456"/>
    </location>
    <ligand>
        <name>hybrid [4Fe-2O-2S] cluster</name>
        <dbReference type="ChEBI" id="CHEBI:60519"/>
    </ligand>
</feature>
<feature type="binding site" evidence="1">
    <location>
        <position position="491"/>
    </location>
    <ligand>
        <name>hybrid [4Fe-2O-2S] cluster</name>
        <dbReference type="ChEBI" id="CHEBI:60519"/>
    </ligand>
</feature>
<feature type="binding site" evidence="1">
    <location>
        <position position="493"/>
    </location>
    <ligand>
        <name>hybrid [4Fe-2O-2S] cluster</name>
        <dbReference type="ChEBI" id="CHEBI:60519"/>
    </ligand>
</feature>
<feature type="modified residue" description="Cysteine persulfide" evidence="1">
    <location>
        <position position="403"/>
    </location>
</feature>
<evidence type="ECO:0000255" key="1">
    <source>
        <dbReference type="HAMAP-Rule" id="MF_00069"/>
    </source>
</evidence>
<organism>
    <name type="scientific">Desulfitobacterium hafniense (strain DSM 10664 / DCB-2)</name>
    <dbReference type="NCBI Taxonomy" id="272564"/>
    <lineage>
        <taxon>Bacteria</taxon>
        <taxon>Bacillati</taxon>
        <taxon>Bacillota</taxon>
        <taxon>Clostridia</taxon>
        <taxon>Eubacteriales</taxon>
        <taxon>Desulfitobacteriaceae</taxon>
        <taxon>Desulfitobacterium</taxon>
    </lineage>
</organism>
<reference key="1">
    <citation type="journal article" date="2012" name="BMC Microbiol.">
        <title>Genome sequence of Desulfitobacterium hafniense DCB-2, a Gram-positive anaerobe capable of dehalogenation and metal reduction.</title>
        <authorList>
            <person name="Kim S.H."/>
            <person name="Harzman C."/>
            <person name="Davis J.K."/>
            <person name="Hutcheson R."/>
            <person name="Broderick J.B."/>
            <person name="Marsh T.L."/>
            <person name="Tiedje J.M."/>
        </authorList>
    </citation>
    <scope>NUCLEOTIDE SEQUENCE [LARGE SCALE GENOMIC DNA]</scope>
    <source>
        <strain>DSM 10664 / DCB-2</strain>
    </source>
</reference>
<proteinExistence type="inferred from homology"/>
<dbReference type="EC" id="1.7.99.1" evidence="1"/>
<dbReference type="EMBL" id="CP001336">
    <property type="protein sequence ID" value="ACL22540.1"/>
    <property type="molecule type" value="Genomic_DNA"/>
</dbReference>
<dbReference type="RefSeq" id="WP_005817166.1">
    <property type="nucleotide sequence ID" value="NC_011830.1"/>
</dbReference>
<dbReference type="SMR" id="B8FWP2"/>
<dbReference type="KEGG" id="dhd:Dhaf_4539"/>
<dbReference type="HOGENOM" id="CLU_038344_2_0_9"/>
<dbReference type="Proteomes" id="UP000007726">
    <property type="component" value="Chromosome"/>
</dbReference>
<dbReference type="GO" id="GO:0005737">
    <property type="term" value="C:cytoplasm"/>
    <property type="evidence" value="ECO:0007669"/>
    <property type="project" value="UniProtKB-SubCell"/>
</dbReference>
<dbReference type="GO" id="GO:0051539">
    <property type="term" value="F:4 iron, 4 sulfur cluster binding"/>
    <property type="evidence" value="ECO:0007669"/>
    <property type="project" value="UniProtKB-KW"/>
</dbReference>
<dbReference type="GO" id="GO:0050418">
    <property type="term" value="F:hydroxylamine reductase activity"/>
    <property type="evidence" value="ECO:0007669"/>
    <property type="project" value="UniProtKB-UniRule"/>
</dbReference>
<dbReference type="GO" id="GO:0046872">
    <property type="term" value="F:metal ion binding"/>
    <property type="evidence" value="ECO:0007669"/>
    <property type="project" value="UniProtKB-KW"/>
</dbReference>
<dbReference type="GO" id="GO:0004601">
    <property type="term" value="F:peroxidase activity"/>
    <property type="evidence" value="ECO:0007669"/>
    <property type="project" value="TreeGrafter"/>
</dbReference>
<dbReference type="GO" id="GO:0042542">
    <property type="term" value="P:response to hydrogen peroxide"/>
    <property type="evidence" value="ECO:0007669"/>
    <property type="project" value="TreeGrafter"/>
</dbReference>
<dbReference type="CDD" id="cd01914">
    <property type="entry name" value="HCP"/>
    <property type="match status" value="1"/>
</dbReference>
<dbReference type="FunFam" id="1.20.1270.20:FF:000001">
    <property type="entry name" value="Hydroxylamine reductase"/>
    <property type="match status" value="1"/>
</dbReference>
<dbReference type="FunFam" id="3.40.50.2030:FF:000001">
    <property type="entry name" value="Hydroxylamine reductase"/>
    <property type="match status" value="1"/>
</dbReference>
<dbReference type="FunFam" id="3.40.50.2030:FF:000002">
    <property type="entry name" value="Hydroxylamine reductase"/>
    <property type="match status" value="1"/>
</dbReference>
<dbReference type="Gene3D" id="1.20.1270.20">
    <property type="match status" value="2"/>
</dbReference>
<dbReference type="Gene3D" id="3.40.50.2030">
    <property type="match status" value="2"/>
</dbReference>
<dbReference type="HAMAP" id="MF_00069">
    <property type="entry name" value="Hydroxylam_reduct"/>
    <property type="match status" value="1"/>
</dbReference>
<dbReference type="InterPro" id="IPR004137">
    <property type="entry name" value="HCP/CODH"/>
</dbReference>
<dbReference type="InterPro" id="IPR010048">
    <property type="entry name" value="Hydroxylam_reduct"/>
</dbReference>
<dbReference type="InterPro" id="IPR016099">
    <property type="entry name" value="Prismane-like_a/b-sand"/>
</dbReference>
<dbReference type="InterPro" id="IPR011254">
    <property type="entry name" value="Prismane-like_sf"/>
</dbReference>
<dbReference type="InterPro" id="IPR016100">
    <property type="entry name" value="Prismane_a-bundle"/>
</dbReference>
<dbReference type="NCBIfam" id="TIGR01703">
    <property type="entry name" value="hybrid_clust"/>
    <property type="match status" value="1"/>
</dbReference>
<dbReference type="NCBIfam" id="NF003658">
    <property type="entry name" value="PRK05290.1"/>
    <property type="match status" value="1"/>
</dbReference>
<dbReference type="PANTHER" id="PTHR30109">
    <property type="entry name" value="HYDROXYLAMINE REDUCTASE"/>
    <property type="match status" value="1"/>
</dbReference>
<dbReference type="PANTHER" id="PTHR30109:SF0">
    <property type="entry name" value="HYDROXYLAMINE REDUCTASE"/>
    <property type="match status" value="1"/>
</dbReference>
<dbReference type="Pfam" id="PF03063">
    <property type="entry name" value="Prismane"/>
    <property type="match status" value="1"/>
</dbReference>
<dbReference type="PIRSF" id="PIRSF000076">
    <property type="entry name" value="HCP"/>
    <property type="match status" value="1"/>
</dbReference>
<dbReference type="SUPFAM" id="SSF56821">
    <property type="entry name" value="Prismane protein-like"/>
    <property type="match status" value="1"/>
</dbReference>
<sequence length="549" mass="59572">MSMFCFQCQETAKGTGCTIKGVCGKTADVANLQDLLLYVMKGIAINSLQARELGIVRQDVDKFVMEGLFATITNANFDNARFVALVREGLALRDSLKADIVKAGGVLPANLHDSATWTADSAEEFEQKAAQVGILATENEDVRSLRELLIYGLKGMAAYAEHAFALGYEDNSIFAFMMKGLAATTDDSLSADQLVALVLEAGKYGVDVMALLDKANTTSYGNPEITKVNIGVRNNPAILISGHDLRDLEDLLKQTEGTGVDVYTHGEMLPAHYYPAFKKYAHFVGNYGNAWWKQDKEFDSFNGAILLTTNCLVPPKDSYKDRLFTTSVVGYEGVKHIPAREAGKVKDFSAVIELAKTLPAPTEIETGEIVGGFAHNQVFAVADKVVEAVKSGAVKRFFVMAGCDGRMKSRDYYTEFAKALPQDTIILTAGCAKYKYNKLALGDIGGIPRVLDAGQCNDSYSLAVIALKLKEVFGLDDVNQLPISYNIAWYEQKAVIVLLALLYLGVKNIHLGPTLPGFLSPNVAKVLVENFGIAGITTVEDDVNLFMGA</sequence>
<name>HCP_DESHD</name>
<keyword id="KW-0004">4Fe-4S</keyword>
<keyword id="KW-0963">Cytoplasm</keyword>
<keyword id="KW-0408">Iron</keyword>
<keyword id="KW-0411">Iron-sulfur</keyword>
<keyword id="KW-0479">Metal-binding</keyword>
<keyword id="KW-0560">Oxidoreductase</keyword>
<accession>B8FWP2</accession>
<gene>
    <name evidence="1" type="primary">hcp</name>
    <name type="ordered locus">Dhaf_4539</name>
</gene>
<comment type="function">
    <text evidence="1">Catalyzes the reduction of hydroxylamine to form NH(3) and H(2)O.</text>
</comment>
<comment type="catalytic activity">
    <reaction evidence="1">
        <text>A + NH4(+) + H2O = hydroxylamine + AH2 + H(+)</text>
        <dbReference type="Rhea" id="RHEA:22052"/>
        <dbReference type="ChEBI" id="CHEBI:13193"/>
        <dbReference type="ChEBI" id="CHEBI:15377"/>
        <dbReference type="ChEBI" id="CHEBI:15378"/>
        <dbReference type="ChEBI" id="CHEBI:15429"/>
        <dbReference type="ChEBI" id="CHEBI:17499"/>
        <dbReference type="ChEBI" id="CHEBI:28938"/>
        <dbReference type="EC" id="1.7.99.1"/>
    </reaction>
</comment>
<comment type="cofactor">
    <cofactor evidence="1">
        <name>[4Fe-4S] cluster</name>
        <dbReference type="ChEBI" id="CHEBI:49883"/>
    </cofactor>
    <text evidence="1">Binds 1 [4Fe-4S] cluster.</text>
</comment>
<comment type="cofactor">
    <cofactor evidence="1">
        <name>hybrid [4Fe-2O-2S] cluster</name>
        <dbReference type="ChEBI" id="CHEBI:60519"/>
    </cofactor>
    <text evidence="1">Binds 1 hybrid [4Fe-2O-2S] cluster.</text>
</comment>
<comment type="subcellular location">
    <subcellularLocation>
        <location evidence="1">Cytoplasm</location>
    </subcellularLocation>
</comment>
<comment type="similarity">
    <text evidence="1">Belongs to the HCP family.</text>
</comment>